<proteinExistence type="evidence at protein level"/>
<reference key="1">
    <citation type="journal article" date="2000" name="Nature">
        <title>Sequence and analysis of chromosome 1 of the plant Arabidopsis thaliana.</title>
        <authorList>
            <person name="Theologis A."/>
            <person name="Ecker J.R."/>
            <person name="Palm C.J."/>
            <person name="Federspiel N.A."/>
            <person name="Kaul S."/>
            <person name="White O."/>
            <person name="Alonso J."/>
            <person name="Altafi H."/>
            <person name="Araujo R."/>
            <person name="Bowman C.L."/>
            <person name="Brooks S.Y."/>
            <person name="Buehler E."/>
            <person name="Chan A."/>
            <person name="Chao Q."/>
            <person name="Chen H."/>
            <person name="Cheuk R.F."/>
            <person name="Chin C.W."/>
            <person name="Chung M.K."/>
            <person name="Conn L."/>
            <person name="Conway A.B."/>
            <person name="Conway A.R."/>
            <person name="Creasy T.H."/>
            <person name="Dewar K."/>
            <person name="Dunn P."/>
            <person name="Etgu P."/>
            <person name="Feldblyum T.V."/>
            <person name="Feng J.-D."/>
            <person name="Fong B."/>
            <person name="Fujii C.Y."/>
            <person name="Gill J.E."/>
            <person name="Goldsmith A.D."/>
            <person name="Haas B."/>
            <person name="Hansen N.F."/>
            <person name="Hughes B."/>
            <person name="Huizar L."/>
            <person name="Hunter J.L."/>
            <person name="Jenkins J."/>
            <person name="Johnson-Hopson C."/>
            <person name="Khan S."/>
            <person name="Khaykin E."/>
            <person name="Kim C.J."/>
            <person name="Koo H.L."/>
            <person name="Kremenetskaia I."/>
            <person name="Kurtz D.B."/>
            <person name="Kwan A."/>
            <person name="Lam B."/>
            <person name="Langin-Hooper S."/>
            <person name="Lee A."/>
            <person name="Lee J.M."/>
            <person name="Lenz C.A."/>
            <person name="Li J.H."/>
            <person name="Li Y.-P."/>
            <person name="Lin X."/>
            <person name="Liu S.X."/>
            <person name="Liu Z.A."/>
            <person name="Luros J.S."/>
            <person name="Maiti R."/>
            <person name="Marziali A."/>
            <person name="Militscher J."/>
            <person name="Miranda M."/>
            <person name="Nguyen M."/>
            <person name="Nierman W.C."/>
            <person name="Osborne B.I."/>
            <person name="Pai G."/>
            <person name="Peterson J."/>
            <person name="Pham P.K."/>
            <person name="Rizzo M."/>
            <person name="Rooney T."/>
            <person name="Rowley D."/>
            <person name="Sakano H."/>
            <person name="Salzberg S.L."/>
            <person name="Schwartz J.R."/>
            <person name="Shinn P."/>
            <person name="Southwick A.M."/>
            <person name="Sun H."/>
            <person name="Tallon L.J."/>
            <person name="Tambunga G."/>
            <person name="Toriumi M.J."/>
            <person name="Town C.D."/>
            <person name="Utterback T."/>
            <person name="Van Aken S."/>
            <person name="Vaysberg M."/>
            <person name="Vysotskaia V.S."/>
            <person name="Walker M."/>
            <person name="Wu D."/>
            <person name="Yu G."/>
            <person name="Fraser C.M."/>
            <person name="Venter J.C."/>
            <person name="Davis R.W."/>
        </authorList>
    </citation>
    <scope>NUCLEOTIDE SEQUENCE [LARGE SCALE GENOMIC DNA]</scope>
    <source>
        <strain>cv. Columbia</strain>
    </source>
</reference>
<reference key="2">
    <citation type="journal article" date="2017" name="Plant J.">
        <title>Araport11: a complete reannotation of the Arabidopsis thaliana reference genome.</title>
        <authorList>
            <person name="Cheng C.Y."/>
            <person name="Krishnakumar V."/>
            <person name="Chan A.P."/>
            <person name="Thibaud-Nissen F."/>
            <person name="Schobel S."/>
            <person name="Town C.D."/>
        </authorList>
    </citation>
    <scope>GENOME REANNOTATION</scope>
    <source>
        <strain>cv. Columbia</strain>
    </source>
</reference>
<reference key="3">
    <citation type="journal article" date="2003" name="Science">
        <title>Empirical analysis of transcriptional activity in the Arabidopsis genome.</title>
        <authorList>
            <person name="Yamada K."/>
            <person name="Lim J."/>
            <person name="Dale J.M."/>
            <person name="Chen H."/>
            <person name="Shinn P."/>
            <person name="Palm C.J."/>
            <person name="Southwick A.M."/>
            <person name="Wu H.C."/>
            <person name="Kim C.J."/>
            <person name="Nguyen M."/>
            <person name="Pham P.K."/>
            <person name="Cheuk R.F."/>
            <person name="Karlin-Newmann G."/>
            <person name="Liu S.X."/>
            <person name="Lam B."/>
            <person name="Sakano H."/>
            <person name="Wu T."/>
            <person name="Yu G."/>
            <person name="Miranda M."/>
            <person name="Quach H.L."/>
            <person name="Tripp M."/>
            <person name="Chang C.H."/>
            <person name="Lee J.M."/>
            <person name="Toriumi M.J."/>
            <person name="Chan M.M."/>
            <person name="Tang C.C."/>
            <person name="Onodera C.S."/>
            <person name="Deng J.M."/>
            <person name="Akiyama K."/>
            <person name="Ansari Y."/>
            <person name="Arakawa T."/>
            <person name="Banh J."/>
            <person name="Banno F."/>
            <person name="Bowser L."/>
            <person name="Brooks S.Y."/>
            <person name="Carninci P."/>
            <person name="Chao Q."/>
            <person name="Choy N."/>
            <person name="Enju A."/>
            <person name="Goldsmith A.D."/>
            <person name="Gurjal M."/>
            <person name="Hansen N.F."/>
            <person name="Hayashizaki Y."/>
            <person name="Johnson-Hopson C."/>
            <person name="Hsuan V.W."/>
            <person name="Iida K."/>
            <person name="Karnes M."/>
            <person name="Khan S."/>
            <person name="Koesema E."/>
            <person name="Ishida J."/>
            <person name="Jiang P.X."/>
            <person name="Jones T."/>
            <person name="Kawai J."/>
            <person name="Kamiya A."/>
            <person name="Meyers C."/>
            <person name="Nakajima M."/>
            <person name="Narusaka M."/>
            <person name="Seki M."/>
            <person name="Sakurai T."/>
            <person name="Satou M."/>
            <person name="Tamse R."/>
            <person name="Vaysberg M."/>
            <person name="Wallender E.K."/>
            <person name="Wong C."/>
            <person name="Yamamura Y."/>
            <person name="Yuan S."/>
            <person name="Shinozaki K."/>
            <person name="Davis R.W."/>
            <person name="Theologis A."/>
            <person name="Ecker J.R."/>
        </authorList>
    </citation>
    <scope>NUCLEOTIDE SEQUENCE [LARGE SCALE MRNA]</scope>
    <source>
        <strain>cv. Columbia</strain>
    </source>
</reference>
<reference key="4">
    <citation type="journal article" date="2011" name="Plant Cell">
        <title>POD1 regulates pollen tube guidance in response to micropylar female signaling and acts in early embryo patterning in arabidopsis.</title>
        <authorList>
            <person name="Li H.J."/>
            <person name="Xue Y."/>
            <person name="Jia D.J."/>
            <person name="Wang T."/>
            <person name="Hi D.Q."/>
            <person name="Liu J."/>
            <person name="Cui F."/>
            <person name="Xie Q."/>
            <person name="Ye D."/>
            <person name="Yang W.C."/>
        </authorList>
    </citation>
    <scope>FUNCTION</scope>
    <scope>DISRUPTION PHENOTYPE</scope>
    <scope>SUBCELLULAR LOCATION</scope>
    <scope>MUTAGENESIS OF 1-MET--LYS-60; ARG-4; ARG-8; 29-ARG-ARG-30; 603-ARG--ASP-624 AND 614-ARG--ARG-616</scope>
    <scope>INTERACTION WITH CRT3</scope>
    <scope>TISSUE SPECIFICITY</scope>
</reference>
<dbReference type="EMBL" id="AC012563">
    <property type="protein sequence ID" value="AAG51995.1"/>
    <property type="status" value="ALT_SEQ"/>
    <property type="molecule type" value="Genomic_DNA"/>
</dbReference>
<dbReference type="EMBL" id="CP002684">
    <property type="protein sequence ID" value="AEE34729.1"/>
    <property type="molecule type" value="Genomic_DNA"/>
</dbReference>
<dbReference type="EMBL" id="AY064002">
    <property type="protein sequence ID" value="AAL36358.1"/>
    <property type="molecule type" value="mRNA"/>
</dbReference>
<dbReference type="PIR" id="E96702">
    <property type="entry name" value="E96702"/>
</dbReference>
<dbReference type="RefSeq" id="NP_176963.2">
    <property type="nucleotide sequence ID" value="NM_105466.3"/>
</dbReference>
<dbReference type="FunCoup" id="F4HVJ3">
    <property type="interactions" value="3170"/>
</dbReference>
<dbReference type="STRING" id="3702.F4HVJ3"/>
<dbReference type="iPTMnet" id="F4HVJ3"/>
<dbReference type="PaxDb" id="3702-AT1G67960.1"/>
<dbReference type="ProteomicsDB" id="234792"/>
<dbReference type="EnsemblPlants" id="AT1G67960.1">
    <property type="protein sequence ID" value="AT1G67960.1"/>
    <property type="gene ID" value="AT1G67960"/>
</dbReference>
<dbReference type="GeneID" id="843124"/>
<dbReference type="Gramene" id="AT1G67960.1">
    <property type="protein sequence ID" value="AT1G67960.1"/>
    <property type="gene ID" value="AT1G67960"/>
</dbReference>
<dbReference type="KEGG" id="ath:AT1G67960"/>
<dbReference type="Araport" id="AT1G67960"/>
<dbReference type="TAIR" id="AT1G67960">
    <property type="gene designation" value="POD1"/>
</dbReference>
<dbReference type="eggNOG" id="KOG2490">
    <property type="taxonomic scope" value="Eukaryota"/>
</dbReference>
<dbReference type="HOGENOM" id="CLU_003655_4_1_1"/>
<dbReference type="InParanoid" id="F4HVJ3"/>
<dbReference type="OMA" id="NMRFWIW"/>
<dbReference type="PRO" id="PR:F4HVJ3"/>
<dbReference type="Proteomes" id="UP000006548">
    <property type="component" value="Chromosome 1"/>
</dbReference>
<dbReference type="ExpressionAtlas" id="F4HVJ3">
    <property type="expression patterns" value="baseline and differential"/>
</dbReference>
<dbReference type="GO" id="GO:0005788">
    <property type="term" value="C:endoplasmic reticulum lumen"/>
    <property type="evidence" value="ECO:0000314"/>
    <property type="project" value="TAIR"/>
</dbReference>
<dbReference type="GO" id="GO:0016020">
    <property type="term" value="C:membrane"/>
    <property type="evidence" value="ECO:0007669"/>
    <property type="project" value="UniProtKB-SubCell"/>
</dbReference>
<dbReference type="GO" id="GO:0009793">
    <property type="term" value="P:embryo development ending in seed dormancy"/>
    <property type="evidence" value="ECO:0000315"/>
    <property type="project" value="TAIR"/>
</dbReference>
<dbReference type="GO" id="GO:0035437">
    <property type="term" value="P:maintenance of protein localization in endoplasmic reticulum"/>
    <property type="evidence" value="ECO:0000315"/>
    <property type="project" value="TAIR"/>
</dbReference>
<dbReference type="GO" id="GO:0010183">
    <property type="term" value="P:pollen tube guidance"/>
    <property type="evidence" value="ECO:0000315"/>
    <property type="project" value="TAIR"/>
</dbReference>
<dbReference type="InterPro" id="IPR008010">
    <property type="entry name" value="Tatp1"/>
</dbReference>
<dbReference type="PANTHER" id="PTHR13317">
    <property type="entry name" value="TRANSMEMBRANE ANTERIOR POSTERIOR TRANSFORMATION PROTEIN 1 HOMOLOG"/>
    <property type="match status" value="1"/>
</dbReference>
<dbReference type="PANTHER" id="PTHR13317:SF4">
    <property type="entry name" value="TRANSMEMBRANE ANTERIOR POSTERIOR TRANSFORMATION PROTEIN 1 HOMOLOG"/>
    <property type="match status" value="1"/>
</dbReference>
<dbReference type="Pfam" id="PF05346">
    <property type="entry name" value="DUF747"/>
    <property type="match status" value="1"/>
</dbReference>
<keyword id="KW-0256">Endoplasmic reticulum</keyword>
<keyword id="KW-0472">Membrane</keyword>
<keyword id="KW-1185">Reference proteome</keyword>
<keyword id="KW-0812">Transmembrane</keyword>
<keyword id="KW-1133">Transmembrane helix</keyword>
<protein>
    <recommendedName>
        <fullName>Protein POLLEN DEFECTIVE IN GUIDANCE 1</fullName>
    </recommendedName>
</protein>
<comment type="function">
    <text evidence="3">Probable component of the calreticulin 3 (CRT3) complex, acting probably as a co-chaperone involved in protein retention in the endoplasmic reticulum lumen. Required for micropylar pollen tube guidance. Plays an essential role in cell plate orientation or positioning in early embryo patterning.</text>
</comment>
<comment type="subunit">
    <text evidence="3">Interacts with CRT3, but not with CRT1 or CNX.</text>
</comment>
<comment type="subcellular location">
    <subcellularLocation>
        <location evidence="4">Membrane</location>
        <topology evidence="4">Multi-pass membrane protein</topology>
    </subcellularLocation>
    <subcellularLocation>
        <location evidence="3">Endoplasmic reticulum lumen</location>
    </subcellularLocation>
    <text>Exclusive ER lumen localization and no membrane localization in PubMed:21954464.</text>
</comment>
<comment type="tissue specificity">
    <text evidence="3">Expressed in inflorescences, siliques, roots and shoots. Expressed in early embryo, endosperm, mature pollen and pollen tubes, synergide cells and weakly in antipodal cells.</text>
</comment>
<comment type="disruption phenotype">
    <text evidence="3">Defective in micropylar pollen tube guidance leading to zygotic lethality.</text>
</comment>
<comment type="similarity">
    <text evidence="4">Belongs to the TAPT1 family.</text>
</comment>
<comment type="sequence caution" evidence="4">
    <conflict type="erroneous gene model prediction">
        <sequence resource="EMBL-CDS" id="AAG51995"/>
    </conflict>
</comment>
<name>POD1_ARATH</name>
<gene>
    <name type="primary">POD1</name>
    <name type="ordered locus">At1g67960</name>
    <name type="ORF">T23K23.19</name>
</gene>
<feature type="chain" id="PRO_0000416783" description="Protein POLLEN DEFECTIVE IN GUIDANCE 1">
    <location>
        <begin position="1"/>
        <end position="624"/>
    </location>
</feature>
<feature type="transmembrane region" description="Helical" evidence="1">
    <location>
        <begin position="263"/>
        <end position="283"/>
    </location>
</feature>
<feature type="transmembrane region" description="Helical" evidence="1">
    <location>
        <begin position="305"/>
        <end position="325"/>
    </location>
</feature>
<feature type="transmembrane region" description="Helical" evidence="1">
    <location>
        <begin position="391"/>
        <end position="411"/>
    </location>
</feature>
<feature type="transmembrane region" description="Helical" evidence="1">
    <location>
        <begin position="413"/>
        <end position="433"/>
    </location>
</feature>
<feature type="transmembrane region" description="Helical" evidence="1">
    <location>
        <begin position="545"/>
        <end position="565"/>
    </location>
</feature>
<feature type="transmembrane region" description="Helical" evidence="1">
    <location>
        <begin position="578"/>
        <end position="598"/>
    </location>
</feature>
<feature type="region of interest" description="Disordered" evidence="2">
    <location>
        <begin position="20"/>
        <end position="63"/>
    </location>
</feature>
<feature type="compositionally biased region" description="Polar residues" evidence="2">
    <location>
        <begin position="33"/>
        <end position="42"/>
    </location>
</feature>
<feature type="compositionally biased region" description="Basic residues" evidence="2">
    <location>
        <begin position="49"/>
        <end position="61"/>
    </location>
</feature>
<feature type="mutagenesis site" description="Loss of endoplasmic reticulum localization." evidence="3">
    <location>
        <begin position="1"/>
        <end position="60"/>
    </location>
</feature>
<feature type="mutagenesis site" description="No effect on endoplasmic reticulum localization; when associated with A-8." evidence="3">
    <original>R</original>
    <variation>A</variation>
    <location>
        <position position="4"/>
    </location>
</feature>
<feature type="mutagenesis site" description="No effect on endoplasmic reticulum localization; when associated with A-4." evidence="3">
    <original>R</original>
    <variation>A</variation>
    <location>
        <position position="8"/>
    </location>
</feature>
<feature type="mutagenesis site" description="No effect on endoplasmic reticulum localization." evidence="3">
    <original>RR</original>
    <variation>AA</variation>
    <location>
        <begin position="29"/>
        <end position="30"/>
    </location>
</feature>
<feature type="mutagenesis site" description="Loss of endoplasmic reticulum localization." evidence="3">
    <location>
        <begin position="603"/>
        <end position="624"/>
    </location>
</feature>
<feature type="mutagenesis site" description="Loss of endoplasmic reticulum localization." evidence="3">
    <original>RRR</original>
    <variation>AAA</variation>
    <location>
        <begin position="614"/>
        <end position="616"/>
    </location>
</feature>
<feature type="mutagenesis site" description="No effect on endoplasmic reticulum localization.">
    <original>RR</original>
    <variation>AA</variation>
    <location>
        <begin position="614"/>
        <end position="615"/>
    </location>
</feature>
<feature type="mutagenesis site" description="No effect on endoplasmic reticulum localization.">
    <original>RR</original>
    <variation>AA</variation>
    <location>
        <begin position="615"/>
        <end position="616"/>
    </location>
</feature>
<feature type="sequence conflict" description="In Ref. 3; AAL36358." evidence="4" ref="3">
    <original>F</original>
    <variation>L</variation>
    <location>
        <position position="225"/>
    </location>
</feature>
<evidence type="ECO:0000255" key="1"/>
<evidence type="ECO:0000256" key="2">
    <source>
        <dbReference type="SAM" id="MobiDB-lite"/>
    </source>
</evidence>
<evidence type="ECO:0000269" key="3">
    <source>
    </source>
</evidence>
<evidence type="ECO:0000305" key="4"/>
<accession>F4HVJ3</accession>
<accession>Q8VZM8</accession>
<accession>Q9C9W2</accession>
<organism>
    <name type="scientific">Arabidopsis thaliana</name>
    <name type="common">Mouse-ear cress</name>
    <dbReference type="NCBI Taxonomy" id="3702"/>
    <lineage>
        <taxon>Eukaryota</taxon>
        <taxon>Viridiplantae</taxon>
        <taxon>Streptophyta</taxon>
        <taxon>Embryophyta</taxon>
        <taxon>Tracheophyta</taxon>
        <taxon>Spermatophyta</taxon>
        <taxon>Magnoliopsida</taxon>
        <taxon>eudicotyledons</taxon>
        <taxon>Gunneridae</taxon>
        <taxon>Pentapetalae</taxon>
        <taxon>rosids</taxon>
        <taxon>malvids</taxon>
        <taxon>Brassicales</taxon>
        <taxon>Brassicaceae</taxon>
        <taxon>Camelineae</taxon>
        <taxon>Arabidopsis</taxon>
    </lineage>
</organism>
<sequence length="624" mass="70405">MAIRSSGRKLSFEILSQNSSFENDDTSIRRSSSDPITGNVASESPRDYGKRKRSKKKKKKVNQVETILENGDSHSTIITGSSGDFGETTTMFENRLNYYGGGGSGSSGGGCVVTLLDGQTVHHNGFNFGELRQRNVNGSVDGSNDERWSDTLSSDKKLYMEETSVELSPSENPPFQEVQHQFPRSEINGNVVRRLDTEASLDWKQLVADDPDFLSAETRSPMKYFMEEIYGGISLRSTTTPGNDIERERIYDTIFRLPWRCEVLIDTGFFVCVNSFLSLLTVMPIRVLLIFMDAFKNRQFRRPSASELSDLACFLVLATGTILLGRTDISLIYHMIRGQSTIKLYVVYNILEIFDRLCQSFCGDVFGALFSSAKGLSISPPEKLRFSTWRFVSDLALTMAASILHSFILLAQAITLSTCIVAHNNALLALLVSNNFAEIKSSVFKRFSKDNIHGLVYADSIERFHISAFLVSVLAQNILESEGAWFGNFIYNATTVFFCEMMIDIIKHSFLAKFNDIKPIAYSEFLQALCEQTLNIRPEDRKTNLTFVPLAPACVVIRVLTPVYAAHLPYSPLPWRMLWMVILFVITYIMLTSLKVLIGMGLRKHATWYINRCRRRNSSHLHND</sequence>